<protein>
    <recommendedName>
        <fullName>Cytochrome P450 71A21</fullName>
        <ecNumber>1.14.-.-</ecNumber>
    </recommendedName>
</protein>
<accession>Q9STL2</accession>
<keyword id="KW-0349">Heme</keyword>
<keyword id="KW-0408">Iron</keyword>
<keyword id="KW-0472">Membrane</keyword>
<keyword id="KW-0479">Metal-binding</keyword>
<keyword id="KW-0503">Monooxygenase</keyword>
<keyword id="KW-0560">Oxidoreductase</keyword>
<keyword id="KW-1185">Reference proteome</keyword>
<keyword id="KW-0812">Transmembrane</keyword>
<keyword id="KW-1133">Transmembrane helix</keyword>
<feature type="chain" id="PRO_0000052071" description="Cytochrome P450 71A21">
    <location>
        <begin position="1"/>
        <end position="490"/>
    </location>
</feature>
<feature type="transmembrane region" description="Helical" evidence="2">
    <location>
        <begin position="1"/>
        <end position="21"/>
    </location>
</feature>
<feature type="binding site" description="axial binding residue" evidence="1">
    <location>
        <position position="432"/>
    </location>
    <ligand>
        <name>heme</name>
        <dbReference type="ChEBI" id="CHEBI:30413"/>
    </ligand>
    <ligandPart>
        <name>Fe</name>
        <dbReference type="ChEBI" id="CHEBI:18248"/>
    </ligandPart>
</feature>
<gene>
    <name type="primary">CYP71A21</name>
    <name type="ordered locus">At3g48320</name>
    <name type="ORF">T29H11.160</name>
</gene>
<comment type="cofactor">
    <cofactor evidence="1">
        <name>heme</name>
        <dbReference type="ChEBI" id="CHEBI:30413"/>
    </cofactor>
</comment>
<comment type="subcellular location">
    <subcellularLocation>
        <location evidence="3">Membrane</location>
        <topology evidence="3">Single-pass membrane protein</topology>
    </subcellularLocation>
</comment>
<comment type="similarity">
    <text evidence="3">Belongs to the cytochrome P450 family.</text>
</comment>
<comment type="sequence caution" evidence="3">
    <conflict type="frameshift">
        <sequence resource="EMBL" id="AK226557"/>
    </conflict>
</comment>
<evidence type="ECO:0000250" key="1"/>
<evidence type="ECO:0000255" key="2"/>
<evidence type="ECO:0000305" key="3"/>
<name>C71AL_ARATH</name>
<dbReference type="EC" id="1.14.-.-"/>
<dbReference type="EMBL" id="AL049659">
    <property type="protein sequence ID" value="CAB41166.1"/>
    <property type="molecule type" value="Genomic_DNA"/>
</dbReference>
<dbReference type="EMBL" id="CP002686">
    <property type="protein sequence ID" value="AEE78400.1"/>
    <property type="molecule type" value="Genomic_DNA"/>
</dbReference>
<dbReference type="EMBL" id="AK226557">
    <property type="status" value="NOT_ANNOTATED_CDS"/>
    <property type="molecule type" value="mRNA"/>
</dbReference>
<dbReference type="PIR" id="T06710">
    <property type="entry name" value="T06710"/>
</dbReference>
<dbReference type="RefSeq" id="NP_680111.1">
    <property type="nucleotide sequence ID" value="NM_148858.2"/>
</dbReference>
<dbReference type="SMR" id="Q9STL2"/>
<dbReference type="FunCoup" id="Q9STL2">
    <property type="interactions" value="388"/>
</dbReference>
<dbReference type="IntAct" id="Q9STL2">
    <property type="interactions" value="1"/>
</dbReference>
<dbReference type="STRING" id="3702.Q9STL2"/>
<dbReference type="iPTMnet" id="Q9STL2"/>
<dbReference type="PaxDb" id="3702-AT3G48320.1"/>
<dbReference type="ProteomicsDB" id="240261"/>
<dbReference type="EnsemblPlants" id="AT3G48320.1">
    <property type="protein sequence ID" value="AT3G48320.1"/>
    <property type="gene ID" value="AT3G48320"/>
</dbReference>
<dbReference type="GeneID" id="823990"/>
<dbReference type="Gramene" id="AT3G48320.1">
    <property type="protein sequence ID" value="AT3G48320.1"/>
    <property type="gene ID" value="AT3G48320"/>
</dbReference>
<dbReference type="KEGG" id="ath:AT3G48320"/>
<dbReference type="Araport" id="AT3G48320"/>
<dbReference type="TAIR" id="AT3G48320">
    <property type="gene designation" value="CYP71A21"/>
</dbReference>
<dbReference type="eggNOG" id="KOG0156">
    <property type="taxonomic scope" value="Eukaryota"/>
</dbReference>
<dbReference type="HOGENOM" id="CLU_001570_4_1_1"/>
<dbReference type="InParanoid" id="Q9STL2"/>
<dbReference type="OMA" id="IFALLEW"/>
<dbReference type="PhylomeDB" id="Q9STL2"/>
<dbReference type="BioCyc" id="ARA:AT3G48320-MONOMER"/>
<dbReference type="PRO" id="PR:Q9STL2"/>
<dbReference type="Proteomes" id="UP000006548">
    <property type="component" value="Chromosome 3"/>
</dbReference>
<dbReference type="ExpressionAtlas" id="Q9STL2">
    <property type="expression patterns" value="baseline and differential"/>
</dbReference>
<dbReference type="GO" id="GO:0016020">
    <property type="term" value="C:membrane"/>
    <property type="evidence" value="ECO:0007669"/>
    <property type="project" value="UniProtKB-SubCell"/>
</dbReference>
<dbReference type="GO" id="GO:0020037">
    <property type="term" value="F:heme binding"/>
    <property type="evidence" value="ECO:0007669"/>
    <property type="project" value="InterPro"/>
</dbReference>
<dbReference type="GO" id="GO:0005506">
    <property type="term" value="F:iron ion binding"/>
    <property type="evidence" value="ECO:0007669"/>
    <property type="project" value="InterPro"/>
</dbReference>
<dbReference type="GO" id="GO:0004497">
    <property type="term" value="F:monooxygenase activity"/>
    <property type="evidence" value="ECO:0007669"/>
    <property type="project" value="UniProtKB-KW"/>
</dbReference>
<dbReference type="GO" id="GO:0016705">
    <property type="term" value="F:oxidoreductase activity, acting on paired donors, with incorporation or reduction of molecular oxygen"/>
    <property type="evidence" value="ECO:0007669"/>
    <property type="project" value="InterPro"/>
</dbReference>
<dbReference type="CDD" id="cd11072">
    <property type="entry name" value="CYP71-like"/>
    <property type="match status" value="1"/>
</dbReference>
<dbReference type="FunFam" id="1.10.630.10:FF:000011">
    <property type="entry name" value="Cytochrome P450 83B1"/>
    <property type="match status" value="1"/>
</dbReference>
<dbReference type="Gene3D" id="1.10.630.10">
    <property type="entry name" value="Cytochrome P450"/>
    <property type="match status" value="1"/>
</dbReference>
<dbReference type="InterPro" id="IPR001128">
    <property type="entry name" value="Cyt_P450"/>
</dbReference>
<dbReference type="InterPro" id="IPR017972">
    <property type="entry name" value="Cyt_P450_CS"/>
</dbReference>
<dbReference type="InterPro" id="IPR002401">
    <property type="entry name" value="Cyt_P450_E_grp-I"/>
</dbReference>
<dbReference type="InterPro" id="IPR036396">
    <property type="entry name" value="Cyt_P450_sf"/>
</dbReference>
<dbReference type="PANTHER" id="PTHR47955:SF15">
    <property type="entry name" value="CYTOCHROME P450 71A2-LIKE"/>
    <property type="match status" value="1"/>
</dbReference>
<dbReference type="PANTHER" id="PTHR47955">
    <property type="entry name" value="CYTOCHROME P450 FAMILY 71 PROTEIN"/>
    <property type="match status" value="1"/>
</dbReference>
<dbReference type="Pfam" id="PF00067">
    <property type="entry name" value="p450"/>
    <property type="match status" value="1"/>
</dbReference>
<dbReference type="PRINTS" id="PR00463">
    <property type="entry name" value="EP450I"/>
</dbReference>
<dbReference type="PRINTS" id="PR00385">
    <property type="entry name" value="P450"/>
</dbReference>
<dbReference type="SUPFAM" id="SSF48264">
    <property type="entry name" value="Cytochrome P450"/>
    <property type="match status" value="1"/>
</dbReference>
<dbReference type="PROSITE" id="PS00086">
    <property type="entry name" value="CYTOCHROME_P450"/>
    <property type="match status" value="1"/>
</dbReference>
<sequence>MESMTMIILQSLIIFITILFFKKQKRGKKSNTPRSPPRLPLIGNLHQLGHHPHRSLCSLSHRYGPLMLLHLGRVPVLVVSSADVARDILKTHDRVFASRPRSKLFEKLFYDGRDVAFAPYGEYWRQIKSVCVLRLLSNKMVTSFRNVRQEEISLMMEKIQKSSSLQVNVSELLGSLTNDVISRIALGRKYSGETDSKELMKRLMMLMGEFSVGTYVPWLGWIDWISGLDGQLNKTGNDLDEFLEKVVQDHVDGDGQRTDFVDVLLRIQREKSIGFEIDRLCIKAIVLDVLVAGTDSSYALMDWAMTELLRHPECLRTLQEEVRTICKGNLSVSEEDIQNMSYLKAVIKETTRLHPPLPLLAPHESIQDVILGDYHIPAGTQVMINAWAIGREAATWGPDAEKFRPERHLDSSVDFRGHNFELVPFGAGRRICPAISFAVVLIEVALANFVHRYDWKLPEDSKENQTNVAESTGMVIHRLFPLYAIASSTT</sequence>
<organism>
    <name type="scientific">Arabidopsis thaliana</name>
    <name type="common">Mouse-ear cress</name>
    <dbReference type="NCBI Taxonomy" id="3702"/>
    <lineage>
        <taxon>Eukaryota</taxon>
        <taxon>Viridiplantae</taxon>
        <taxon>Streptophyta</taxon>
        <taxon>Embryophyta</taxon>
        <taxon>Tracheophyta</taxon>
        <taxon>Spermatophyta</taxon>
        <taxon>Magnoliopsida</taxon>
        <taxon>eudicotyledons</taxon>
        <taxon>Gunneridae</taxon>
        <taxon>Pentapetalae</taxon>
        <taxon>rosids</taxon>
        <taxon>malvids</taxon>
        <taxon>Brassicales</taxon>
        <taxon>Brassicaceae</taxon>
        <taxon>Camelineae</taxon>
        <taxon>Arabidopsis</taxon>
    </lineage>
</organism>
<reference key="1">
    <citation type="journal article" date="2000" name="Nature">
        <title>Sequence and analysis of chromosome 3 of the plant Arabidopsis thaliana.</title>
        <authorList>
            <person name="Salanoubat M."/>
            <person name="Lemcke K."/>
            <person name="Rieger M."/>
            <person name="Ansorge W."/>
            <person name="Unseld M."/>
            <person name="Fartmann B."/>
            <person name="Valle G."/>
            <person name="Bloecker H."/>
            <person name="Perez-Alonso M."/>
            <person name="Obermaier B."/>
            <person name="Delseny M."/>
            <person name="Boutry M."/>
            <person name="Grivell L.A."/>
            <person name="Mache R."/>
            <person name="Puigdomenech P."/>
            <person name="De Simone V."/>
            <person name="Choisne N."/>
            <person name="Artiguenave F."/>
            <person name="Robert C."/>
            <person name="Brottier P."/>
            <person name="Wincker P."/>
            <person name="Cattolico L."/>
            <person name="Weissenbach J."/>
            <person name="Saurin W."/>
            <person name="Quetier F."/>
            <person name="Schaefer M."/>
            <person name="Mueller-Auer S."/>
            <person name="Gabel C."/>
            <person name="Fuchs M."/>
            <person name="Benes V."/>
            <person name="Wurmbach E."/>
            <person name="Drzonek H."/>
            <person name="Erfle H."/>
            <person name="Jordan N."/>
            <person name="Bangert S."/>
            <person name="Wiedelmann R."/>
            <person name="Kranz H."/>
            <person name="Voss H."/>
            <person name="Holland R."/>
            <person name="Brandt P."/>
            <person name="Nyakatura G."/>
            <person name="Vezzi A."/>
            <person name="D'Angelo M."/>
            <person name="Pallavicini A."/>
            <person name="Toppo S."/>
            <person name="Simionati B."/>
            <person name="Conrad A."/>
            <person name="Hornischer K."/>
            <person name="Kauer G."/>
            <person name="Loehnert T.-H."/>
            <person name="Nordsiek G."/>
            <person name="Reichelt J."/>
            <person name="Scharfe M."/>
            <person name="Schoen O."/>
            <person name="Bargues M."/>
            <person name="Terol J."/>
            <person name="Climent J."/>
            <person name="Navarro P."/>
            <person name="Collado C."/>
            <person name="Perez-Perez A."/>
            <person name="Ottenwaelder B."/>
            <person name="Duchemin D."/>
            <person name="Cooke R."/>
            <person name="Laudie M."/>
            <person name="Berger-Llauro C."/>
            <person name="Purnelle B."/>
            <person name="Masuy D."/>
            <person name="de Haan M."/>
            <person name="Maarse A.C."/>
            <person name="Alcaraz J.-P."/>
            <person name="Cottet A."/>
            <person name="Casacuberta E."/>
            <person name="Monfort A."/>
            <person name="Argiriou A."/>
            <person name="Flores M."/>
            <person name="Liguori R."/>
            <person name="Vitale D."/>
            <person name="Mannhaupt G."/>
            <person name="Haase D."/>
            <person name="Schoof H."/>
            <person name="Rudd S."/>
            <person name="Zaccaria P."/>
            <person name="Mewes H.-W."/>
            <person name="Mayer K.F.X."/>
            <person name="Kaul S."/>
            <person name="Town C.D."/>
            <person name="Koo H.L."/>
            <person name="Tallon L.J."/>
            <person name="Jenkins J."/>
            <person name="Rooney T."/>
            <person name="Rizzo M."/>
            <person name="Walts A."/>
            <person name="Utterback T."/>
            <person name="Fujii C.Y."/>
            <person name="Shea T.P."/>
            <person name="Creasy T.H."/>
            <person name="Haas B."/>
            <person name="Maiti R."/>
            <person name="Wu D."/>
            <person name="Peterson J."/>
            <person name="Van Aken S."/>
            <person name="Pai G."/>
            <person name="Militscher J."/>
            <person name="Sellers P."/>
            <person name="Gill J.E."/>
            <person name="Feldblyum T.V."/>
            <person name="Preuss D."/>
            <person name="Lin X."/>
            <person name="Nierman W.C."/>
            <person name="Salzberg S.L."/>
            <person name="White O."/>
            <person name="Venter J.C."/>
            <person name="Fraser C.M."/>
            <person name="Kaneko T."/>
            <person name="Nakamura Y."/>
            <person name="Sato S."/>
            <person name="Kato T."/>
            <person name="Asamizu E."/>
            <person name="Sasamoto S."/>
            <person name="Kimura T."/>
            <person name="Idesawa K."/>
            <person name="Kawashima K."/>
            <person name="Kishida Y."/>
            <person name="Kiyokawa C."/>
            <person name="Kohara M."/>
            <person name="Matsumoto M."/>
            <person name="Matsuno A."/>
            <person name="Muraki A."/>
            <person name="Nakayama S."/>
            <person name="Nakazaki N."/>
            <person name="Shinpo S."/>
            <person name="Takeuchi C."/>
            <person name="Wada T."/>
            <person name="Watanabe A."/>
            <person name="Yamada M."/>
            <person name="Yasuda M."/>
            <person name="Tabata S."/>
        </authorList>
    </citation>
    <scope>NUCLEOTIDE SEQUENCE [LARGE SCALE GENOMIC DNA]</scope>
    <source>
        <strain>cv. Columbia</strain>
    </source>
</reference>
<reference key="2">
    <citation type="journal article" date="2017" name="Plant J.">
        <title>Araport11: a complete reannotation of the Arabidopsis thaliana reference genome.</title>
        <authorList>
            <person name="Cheng C.Y."/>
            <person name="Krishnakumar V."/>
            <person name="Chan A.P."/>
            <person name="Thibaud-Nissen F."/>
            <person name="Schobel S."/>
            <person name="Town C.D."/>
        </authorList>
    </citation>
    <scope>GENOME REANNOTATION</scope>
    <source>
        <strain>cv. Columbia</strain>
    </source>
</reference>
<reference key="3">
    <citation type="submission" date="2006-07" db="EMBL/GenBank/DDBJ databases">
        <title>Large-scale analysis of RIKEN Arabidopsis full-length (RAFL) cDNAs.</title>
        <authorList>
            <person name="Totoki Y."/>
            <person name="Seki M."/>
            <person name="Ishida J."/>
            <person name="Nakajima M."/>
            <person name="Enju A."/>
            <person name="Kamiya A."/>
            <person name="Narusaka M."/>
            <person name="Shin-i T."/>
            <person name="Nakagawa M."/>
            <person name="Sakamoto N."/>
            <person name="Oishi K."/>
            <person name="Kohara Y."/>
            <person name="Kobayashi M."/>
            <person name="Toyoda A."/>
            <person name="Sakaki Y."/>
            <person name="Sakurai T."/>
            <person name="Iida K."/>
            <person name="Akiyama K."/>
            <person name="Satou M."/>
            <person name="Toyoda T."/>
            <person name="Konagaya A."/>
            <person name="Carninci P."/>
            <person name="Kawai J."/>
            <person name="Hayashizaki Y."/>
            <person name="Shinozaki K."/>
        </authorList>
    </citation>
    <scope>NUCLEOTIDE SEQUENCE [LARGE SCALE MRNA]</scope>
    <source>
        <strain>cv. Columbia</strain>
    </source>
</reference>
<proteinExistence type="evidence at transcript level"/>